<sequence length="124" mass="13814">MPTIQQLVRKGRTPKVVKTKAPALKANPQQRGVCTRVYTTTPKKPNSALRKVARVKLSNGQEVTAYIPGEGHNLQEHSMVLVRGGRVKDLPGVRYKIVRGALDTQAVKNRKQARSRYGAKMEKK</sequence>
<protein>
    <recommendedName>
        <fullName evidence="2">Small ribosomal subunit protein uS12</fullName>
    </recommendedName>
    <alternativeName>
        <fullName evidence="4">30S ribosomal protein S12</fullName>
    </alternativeName>
</protein>
<keyword id="KW-0488">Methylation</keyword>
<keyword id="KW-0687">Ribonucleoprotein</keyword>
<keyword id="KW-0689">Ribosomal protein</keyword>
<keyword id="KW-0694">RNA-binding</keyword>
<keyword id="KW-0699">rRNA-binding</keyword>
<keyword id="KW-0820">tRNA-binding</keyword>
<accession>B0RB33</accession>
<proteinExistence type="inferred from homology"/>
<reference key="1">
    <citation type="journal article" date="2008" name="J. Bacteriol.">
        <title>Genome of the actinomycete plant pathogen Clavibacter michiganensis subsp. sepedonicus suggests recent niche adaptation.</title>
        <authorList>
            <person name="Bentley S.D."/>
            <person name="Corton C."/>
            <person name="Brown S.E."/>
            <person name="Barron A."/>
            <person name="Clark L."/>
            <person name="Doggett J."/>
            <person name="Harris B."/>
            <person name="Ormond D."/>
            <person name="Quail M.A."/>
            <person name="May G."/>
            <person name="Francis D."/>
            <person name="Knudson D."/>
            <person name="Parkhill J."/>
            <person name="Ishimaru C.A."/>
        </authorList>
    </citation>
    <scope>NUCLEOTIDE SEQUENCE [LARGE SCALE GENOMIC DNA]</scope>
    <source>
        <strain>ATCC 33113 / DSM 20744 / JCM 9667 / LMG 2889 / ICMP 2535 / C-1</strain>
    </source>
</reference>
<evidence type="ECO:0000250" key="1"/>
<evidence type="ECO:0000255" key="2">
    <source>
        <dbReference type="HAMAP-Rule" id="MF_00403"/>
    </source>
</evidence>
<evidence type="ECO:0000256" key="3">
    <source>
        <dbReference type="SAM" id="MobiDB-lite"/>
    </source>
</evidence>
<evidence type="ECO:0000305" key="4"/>
<feature type="chain" id="PRO_1000080386" description="Small ribosomal subunit protein uS12">
    <location>
        <begin position="1"/>
        <end position="124"/>
    </location>
</feature>
<feature type="region of interest" description="Disordered" evidence="3">
    <location>
        <begin position="1"/>
        <end position="20"/>
    </location>
</feature>
<feature type="compositionally biased region" description="Basic residues" evidence="3">
    <location>
        <begin position="9"/>
        <end position="18"/>
    </location>
</feature>
<feature type="modified residue" description="3-methylthioaspartic acid" evidence="1">
    <location>
        <position position="89"/>
    </location>
</feature>
<gene>
    <name evidence="2" type="primary">rpsL</name>
    <name type="ordered locus">CMS0277</name>
</gene>
<dbReference type="EMBL" id="AM849034">
    <property type="protein sequence ID" value="CAQ00398.1"/>
    <property type="molecule type" value="Genomic_DNA"/>
</dbReference>
<dbReference type="RefSeq" id="WP_012039312.1">
    <property type="nucleotide sequence ID" value="NZ_MZMN01000003.1"/>
</dbReference>
<dbReference type="SMR" id="B0RB33"/>
<dbReference type="STRING" id="31964.CMS0277"/>
<dbReference type="GeneID" id="92984335"/>
<dbReference type="KEGG" id="cms:CMS0277"/>
<dbReference type="eggNOG" id="COG0048">
    <property type="taxonomic scope" value="Bacteria"/>
</dbReference>
<dbReference type="HOGENOM" id="CLU_104295_1_2_11"/>
<dbReference type="OrthoDB" id="9802366at2"/>
<dbReference type="Proteomes" id="UP000001318">
    <property type="component" value="Chromosome"/>
</dbReference>
<dbReference type="GO" id="GO:0015935">
    <property type="term" value="C:small ribosomal subunit"/>
    <property type="evidence" value="ECO:0007669"/>
    <property type="project" value="InterPro"/>
</dbReference>
<dbReference type="GO" id="GO:0019843">
    <property type="term" value="F:rRNA binding"/>
    <property type="evidence" value="ECO:0007669"/>
    <property type="project" value="UniProtKB-UniRule"/>
</dbReference>
<dbReference type="GO" id="GO:0003735">
    <property type="term" value="F:structural constituent of ribosome"/>
    <property type="evidence" value="ECO:0007669"/>
    <property type="project" value="InterPro"/>
</dbReference>
<dbReference type="GO" id="GO:0000049">
    <property type="term" value="F:tRNA binding"/>
    <property type="evidence" value="ECO:0007669"/>
    <property type="project" value="UniProtKB-UniRule"/>
</dbReference>
<dbReference type="GO" id="GO:0006412">
    <property type="term" value="P:translation"/>
    <property type="evidence" value="ECO:0007669"/>
    <property type="project" value="UniProtKB-UniRule"/>
</dbReference>
<dbReference type="CDD" id="cd03368">
    <property type="entry name" value="Ribosomal_S12"/>
    <property type="match status" value="1"/>
</dbReference>
<dbReference type="FunFam" id="2.40.50.140:FF:000001">
    <property type="entry name" value="30S ribosomal protein S12"/>
    <property type="match status" value="1"/>
</dbReference>
<dbReference type="Gene3D" id="2.40.50.140">
    <property type="entry name" value="Nucleic acid-binding proteins"/>
    <property type="match status" value="1"/>
</dbReference>
<dbReference type="HAMAP" id="MF_00403_B">
    <property type="entry name" value="Ribosomal_uS12_B"/>
    <property type="match status" value="1"/>
</dbReference>
<dbReference type="InterPro" id="IPR012340">
    <property type="entry name" value="NA-bd_OB-fold"/>
</dbReference>
<dbReference type="InterPro" id="IPR006032">
    <property type="entry name" value="Ribosomal_uS12"/>
</dbReference>
<dbReference type="InterPro" id="IPR005679">
    <property type="entry name" value="Ribosomal_uS12_bac"/>
</dbReference>
<dbReference type="NCBIfam" id="TIGR00981">
    <property type="entry name" value="rpsL_bact"/>
    <property type="match status" value="1"/>
</dbReference>
<dbReference type="PANTHER" id="PTHR11652">
    <property type="entry name" value="30S RIBOSOMAL PROTEIN S12 FAMILY MEMBER"/>
    <property type="match status" value="1"/>
</dbReference>
<dbReference type="Pfam" id="PF00164">
    <property type="entry name" value="Ribosom_S12_S23"/>
    <property type="match status" value="1"/>
</dbReference>
<dbReference type="PIRSF" id="PIRSF002133">
    <property type="entry name" value="Ribosomal_S12/S23"/>
    <property type="match status" value="1"/>
</dbReference>
<dbReference type="PRINTS" id="PR01034">
    <property type="entry name" value="RIBOSOMALS12"/>
</dbReference>
<dbReference type="SUPFAM" id="SSF50249">
    <property type="entry name" value="Nucleic acid-binding proteins"/>
    <property type="match status" value="1"/>
</dbReference>
<dbReference type="PROSITE" id="PS00055">
    <property type="entry name" value="RIBOSOMAL_S12"/>
    <property type="match status" value="1"/>
</dbReference>
<organism>
    <name type="scientific">Clavibacter sepedonicus</name>
    <name type="common">Clavibacter michiganensis subsp. sepedonicus</name>
    <dbReference type="NCBI Taxonomy" id="31964"/>
    <lineage>
        <taxon>Bacteria</taxon>
        <taxon>Bacillati</taxon>
        <taxon>Actinomycetota</taxon>
        <taxon>Actinomycetes</taxon>
        <taxon>Micrococcales</taxon>
        <taxon>Microbacteriaceae</taxon>
        <taxon>Clavibacter</taxon>
    </lineage>
</organism>
<comment type="function">
    <text evidence="2">With S4 and S5 plays an important role in translational accuracy.</text>
</comment>
<comment type="function">
    <text evidence="2">Interacts with and stabilizes bases of the 16S rRNA that are involved in tRNA selection in the A site and with the mRNA backbone. Located at the interface of the 30S and 50S subunits, it traverses the body of the 30S subunit contacting proteins on the other side and probably holding the rRNA structure together. The combined cluster of proteins S8, S12 and S17 appears to hold together the shoulder and platform of the 30S subunit.</text>
</comment>
<comment type="subunit">
    <text evidence="2">Part of the 30S ribosomal subunit. Contacts proteins S8 and S17. May interact with IF1 in the 30S initiation complex.</text>
</comment>
<comment type="similarity">
    <text evidence="2">Belongs to the universal ribosomal protein uS12 family.</text>
</comment>
<name>RS12_CLASE</name>